<dbReference type="EMBL" id="AF387786">
    <property type="protein sequence ID" value="AAL57300.1"/>
    <property type="molecule type" value="mRNA"/>
</dbReference>
<dbReference type="EMBL" id="AE014297">
    <property type="protein sequence ID" value="AAF56900.1"/>
    <property type="molecule type" value="Genomic_DNA"/>
</dbReference>
<dbReference type="EMBL" id="AE014297">
    <property type="protein sequence ID" value="AAS65223.1"/>
    <property type="molecule type" value="Genomic_DNA"/>
</dbReference>
<dbReference type="EMBL" id="AY069375">
    <property type="protein sequence ID" value="AAL39520.1"/>
    <property type="status" value="ALT_INIT"/>
    <property type="molecule type" value="mRNA"/>
</dbReference>
<dbReference type="EMBL" id="AY122250">
    <property type="protein sequence ID" value="AAM52762.1"/>
    <property type="molecule type" value="mRNA"/>
</dbReference>
<dbReference type="EMBL" id="BT001260">
    <property type="protein sequence ID" value="AAN71016.1"/>
    <property type="status" value="ALT_SEQ"/>
    <property type="molecule type" value="mRNA"/>
</dbReference>
<dbReference type="RefSeq" id="NP_001263070.1">
    <molecule id="Q7KRW1-2"/>
    <property type="nucleotide sequence ID" value="NM_001276141.1"/>
</dbReference>
<dbReference type="RefSeq" id="NP_733292.1">
    <molecule id="Q7KRW1-2"/>
    <property type="nucleotide sequence ID" value="NM_170413.3"/>
</dbReference>
<dbReference type="RefSeq" id="NP_733293.1">
    <molecule id="Q7KRW1-2"/>
    <property type="nucleotide sequence ID" value="NM_170414.2"/>
</dbReference>
<dbReference type="RefSeq" id="NP_996303.1">
    <molecule id="Q7KRW1-1"/>
    <property type="nucleotide sequence ID" value="NM_206580.2"/>
</dbReference>
<dbReference type="BioGRID" id="68341">
    <property type="interactions" value="6"/>
</dbReference>
<dbReference type="FunCoup" id="Q7KRW1">
    <property type="interactions" value="1995"/>
</dbReference>
<dbReference type="IntAct" id="Q7KRW1">
    <property type="interactions" value="2"/>
</dbReference>
<dbReference type="STRING" id="7227.FBpp0089379"/>
<dbReference type="GlyGen" id="Q7KRW1">
    <property type="glycosylation" value="1 site"/>
</dbReference>
<dbReference type="PaxDb" id="7227-FBpp0089379"/>
<dbReference type="EnsemblMetazoa" id="FBtr0085429">
    <molecule id="Q7KRW1-2"/>
    <property type="protein sequence ID" value="FBpp0084797"/>
    <property type="gene ID" value="FBgn0039668"/>
</dbReference>
<dbReference type="EnsemblMetazoa" id="FBtr0085430">
    <molecule id="Q7KRW1-2"/>
    <property type="protein sequence ID" value="FBpp0084798"/>
    <property type="gene ID" value="FBgn0039668"/>
</dbReference>
<dbReference type="EnsemblMetazoa" id="FBtr0085432">
    <molecule id="Q7KRW1-1"/>
    <property type="protein sequence ID" value="FBpp0089379"/>
    <property type="gene ID" value="FBgn0039668"/>
</dbReference>
<dbReference type="EnsemblMetazoa" id="FBtr0333188">
    <molecule id="Q7KRW1-2"/>
    <property type="protein sequence ID" value="FBpp0305390"/>
    <property type="gene ID" value="FBgn0039668"/>
</dbReference>
<dbReference type="GeneID" id="43476"/>
<dbReference type="KEGG" id="dme:Dmel_CG2304"/>
<dbReference type="UCSC" id="CG2304-RA">
    <molecule id="Q7KRW1-1"/>
    <property type="organism name" value="d. melanogaster"/>
</dbReference>
<dbReference type="AGR" id="FB:FBgn0039668"/>
<dbReference type="CTD" id="43476"/>
<dbReference type="FlyBase" id="FBgn0039668">
    <property type="gene designation" value="Trc8"/>
</dbReference>
<dbReference type="VEuPathDB" id="VectorBase:FBgn0039668"/>
<dbReference type="eggNOG" id="KOG0802">
    <property type="taxonomic scope" value="Eukaryota"/>
</dbReference>
<dbReference type="GeneTree" id="ENSGT00940000158932"/>
<dbReference type="InParanoid" id="Q7KRW1"/>
<dbReference type="OMA" id="YWSNVST"/>
<dbReference type="OrthoDB" id="4348522at2759"/>
<dbReference type="PhylomeDB" id="Q7KRW1"/>
<dbReference type="SignaLink" id="Q7KRW1"/>
<dbReference type="BioGRID-ORCS" id="43476">
    <property type="hits" value="0 hits in 3 CRISPR screens"/>
</dbReference>
<dbReference type="GenomeRNAi" id="43476"/>
<dbReference type="PRO" id="PR:Q7KRW1"/>
<dbReference type="Proteomes" id="UP000000803">
    <property type="component" value="Chromosome 3R"/>
</dbReference>
<dbReference type="Bgee" id="FBgn0039668">
    <property type="expression patterns" value="Expressed in adult oenocyte (Drosophila) in dorsal vessel heart and 160 other cell types or tissues"/>
</dbReference>
<dbReference type="ExpressionAtlas" id="Q7KRW1">
    <property type="expression patterns" value="baseline and differential"/>
</dbReference>
<dbReference type="GO" id="GO:0036513">
    <property type="term" value="C:Derlin-1 retrotranslocation complex"/>
    <property type="evidence" value="ECO:0000318"/>
    <property type="project" value="GO_Central"/>
</dbReference>
<dbReference type="GO" id="GO:0012505">
    <property type="term" value="C:endomembrane system"/>
    <property type="evidence" value="ECO:0000318"/>
    <property type="project" value="GO_Central"/>
</dbReference>
<dbReference type="GO" id="GO:0005783">
    <property type="term" value="C:endoplasmic reticulum"/>
    <property type="evidence" value="ECO:0000314"/>
    <property type="project" value="UniProtKB"/>
</dbReference>
<dbReference type="GO" id="GO:0061630">
    <property type="term" value="F:ubiquitin protein ligase activity"/>
    <property type="evidence" value="ECO:0000250"/>
    <property type="project" value="FlyBase"/>
</dbReference>
<dbReference type="GO" id="GO:0008270">
    <property type="term" value="F:zinc ion binding"/>
    <property type="evidence" value="ECO:0000255"/>
    <property type="project" value="FlyBase"/>
</dbReference>
<dbReference type="GO" id="GO:0036503">
    <property type="term" value="P:ERAD pathway"/>
    <property type="evidence" value="ECO:0000318"/>
    <property type="project" value="GO_Central"/>
</dbReference>
<dbReference type="GO" id="GO:0045926">
    <property type="term" value="P:negative regulation of growth"/>
    <property type="evidence" value="ECO:0000315"/>
    <property type="project" value="UniProtKB"/>
</dbReference>
<dbReference type="GO" id="GO:0043161">
    <property type="term" value="P:proteasome-mediated ubiquitin-dependent protein catabolic process"/>
    <property type="evidence" value="ECO:0000318"/>
    <property type="project" value="GO_Central"/>
</dbReference>
<dbReference type="GO" id="GO:0016567">
    <property type="term" value="P:protein ubiquitination"/>
    <property type="evidence" value="ECO:0000250"/>
    <property type="project" value="FlyBase"/>
</dbReference>
<dbReference type="GO" id="GO:0007418">
    <property type="term" value="P:ventral midline development"/>
    <property type="evidence" value="ECO:0000315"/>
    <property type="project" value="UniProtKB"/>
</dbReference>
<dbReference type="CDD" id="cd16476">
    <property type="entry name" value="RING-H2_RNF139-like"/>
    <property type="match status" value="1"/>
</dbReference>
<dbReference type="FunFam" id="3.30.40.10:FF:000166">
    <property type="entry name" value="E3 ubiquitin-protein ligase RNF139"/>
    <property type="match status" value="1"/>
</dbReference>
<dbReference type="Gene3D" id="3.30.40.10">
    <property type="entry name" value="Zinc/RING finger domain, C3HC4 (zinc finger)"/>
    <property type="match status" value="1"/>
</dbReference>
<dbReference type="InterPro" id="IPR050731">
    <property type="entry name" value="HRD1_E3_ubiq-ligases"/>
</dbReference>
<dbReference type="InterPro" id="IPR025754">
    <property type="entry name" value="TRC8_N_dom"/>
</dbReference>
<dbReference type="InterPro" id="IPR001841">
    <property type="entry name" value="Znf_RING"/>
</dbReference>
<dbReference type="InterPro" id="IPR013083">
    <property type="entry name" value="Znf_RING/FYVE/PHD"/>
</dbReference>
<dbReference type="PANTHER" id="PTHR22763:SF163">
    <property type="entry name" value="E3 UBIQUITIN-PROTEIN LIGASE RNF139"/>
    <property type="match status" value="1"/>
</dbReference>
<dbReference type="PANTHER" id="PTHR22763">
    <property type="entry name" value="RING ZINC FINGER PROTEIN"/>
    <property type="match status" value="1"/>
</dbReference>
<dbReference type="Pfam" id="PF13705">
    <property type="entry name" value="TRC8_N"/>
    <property type="match status" value="1"/>
</dbReference>
<dbReference type="Pfam" id="PF13923">
    <property type="entry name" value="zf-C3HC4_2"/>
    <property type="match status" value="1"/>
</dbReference>
<dbReference type="SMART" id="SM00184">
    <property type="entry name" value="RING"/>
    <property type="match status" value="1"/>
</dbReference>
<dbReference type="SUPFAM" id="SSF57850">
    <property type="entry name" value="RING/U-box"/>
    <property type="match status" value="1"/>
</dbReference>
<dbReference type="PROSITE" id="PS50089">
    <property type="entry name" value="ZF_RING_2"/>
    <property type="match status" value="1"/>
</dbReference>
<sequence>MSVRTKVLGLVDVMMRVPPVMVIDEILKMDMGMQSWLYPDKDKASGALATPTEAPAVPSGQDPFTSIKELFSHMTTSAQSVLEQSIEKASEAAKTHGMLSSGFNSLMNELSKDQTLADVLSTTTVKFVLCVFAFLSAACIFMLWTRHLVMVYMFLTSLGLTFLSYWSNVSALALTERSPSMVEDLMSLNTTRLLDSGGVVMSLAPHLMAQWFMGMLFAYIHLGPRFEHVQRSMPIIFASPILLAMLPLPAKVVQHLPVVAVFTPIILTKITLMQSAMEASRTVYNGYQYAMNFVSNFGLSALIENEWQRLNVPNVLRVFWTIRLIQGGYALATTESDEPLDLMTATQKLLVDGCETMTAVLGMTGVISMFCHYIGRGFQWYLLTYDDEEKSLGTVSAVLFYILALQTGLTSLSPDKRFIRLCRNLCLLMTALLHFLHNIVSPILMSLSAARNPSRKRHVRALSVCAFLVVLSVSLLYHLWSQQSISTWLLAVTAFSVEVVVKVLVSLATYTLFLLDARRQFFWEKLDDYLYYVRAFGNSVEFCFGILLFINGAWILIFESAQNATGGGIRAIMMCIHAYFNIWCEARAGWSVFMKRRSAVHKISALPEATPAQLQAFDDVCAICYQEMYSAKITRCRHFFHGVCLRKWLYVQDRCPLCHEIMMYTDKADENAPEAEPAPAAQAEQPMRIYPRDDANNAAAQRRSPERAPVEASEQAPATSSSSAAATIGAEAVSAIVESAAAVGEARSLVSVASSSSATHRISASGSSDSSYMTASAQSPPPTATSAAAVATAAASNTTHMFRMSQDQQ</sequence>
<feature type="chain" id="PRO_0000056100" description="Protein TRC8 homolog">
    <location>
        <begin position="1"/>
        <end position="809"/>
    </location>
</feature>
<feature type="transmembrane region" description="Helical" evidence="2">
    <location>
        <begin position="124"/>
        <end position="144"/>
    </location>
</feature>
<feature type="transmembrane region" description="Helical" evidence="2">
    <location>
        <begin position="147"/>
        <end position="167"/>
    </location>
</feature>
<feature type="transmembrane region" description="Helical" evidence="2">
    <location>
        <begin position="200"/>
        <end position="220"/>
    </location>
</feature>
<feature type="transmembrane region" description="Helical" evidence="2">
    <location>
        <begin position="233"/>
        <end position="253"/>
    </location>
</feature>
<feature type="transmembrane region" description="Helical" evidence="2">
    <location>
        <begin position="256"/>
        <end position="276"/>
    </location>
</feature>
<feature type="transmembrane region" description="Helical" evidence="2">
    <location>
        <begin position="350"/>
        <end position="370"/>
    </location>
</feature>
<feature type="transmembrane region" description="Helical" evidence="2">
    <location>
        <begin position="392"/>
        <end position="412"/>
    </location>
</feature>
<feature type="transmembrane region" description="Helical" evidence="2">
    <location>
        <begin position="425"/>
        <end position="445"/>
    </location>
</feature>
<feature type="transmembrane region" description="Helical" evidence="2">
    <location>
        <begin position="461"/>
        <end position="481"/>
    </location>
</feature>
<feature type="transmembrane region" description="Helical" evidence="2">
    <location>
        <begin position="488"/>
        <end position="508"/>
    </location>
</feature>
<feature type="transmembrane region" description="Helical" evidence="2">
    <location>
        <begin position="539"/>
        <end position="559"/>
    </location>
</feature>
<feature type="zinc finger region" description="RING-type; atypical" evidence="3">
    <location>
        <begin position="621"/>
        <end position="659"/>
    </location>
</feature>
<feature type="region of interest" description="Disordered" evidence="4">
    <location>
        <begin position="696"/>
        <end position="724"/>
    </location>
</feature>
<feature type="region of interest" description="Disordered" evidence="4">
    <location>
        <begin position="752"/>
        <end position="788"/>
    </location>
</feature>
<feature type="compositionally biased region" description="Low complexity" evidence="4">
    <location>
        <begin position="711"/>
        <end position="724"/>
    </location>
</feature>
<feature type="splice variant" id="VSP_051924" description="In isoform A." evidence="9">
    <location>
        <begin position="561"/>
        <end position="565"/>
    </location>
</feature>
<feature type="sequence conflict" description="In Ref. 1; AAL57300 and 4; AAM52762." evidence="9" ref="1 4">
    <original>M</original>
    <variation>L</variation>
    <location>
        <position position="273"/>
    </location>
</feature>
<feature type="sequence conflict" description="In Ref. 1; AAL57300 and 4; AAM52762/AAN71016." evidence="9" ref="1 4">
    <original>S</original>
    <variation>P</variation>
    <location>
        <position position="779"/>
    </location>
</feature>
<organism>
    <name type="scientific">Drosophila melanogaster</name>
    <name type="common">Fruit fly</name>
    <dbReference type="NCBI Taxonomy" id="7227"/>
    <lineage>
        <taxon>Eukaryota</taxon>
        <taxon>Metazoa</taxon>
        <taxon>Ecdysozoa</taxon>
        <taxon>Arthropoda</taxon>
        <taxon>Hexapoda</taxon>
        <taxon>Insecta</taxon>
        <taxon>Pterygota</taxon>
        <taxon>Neoptera</taxon>
        <taxon>Endopterygota</taxon>
        <taxon>Diptera</taxon>
        <taxon>Brachycera</taxon>
        <taxon>Muscomorpha</taxon>
        <taxon>Ephydroidea</taxon>
        <taxon>Drosophilidae</taxon>
        <taxon>Drosophila</taxon>
        <taxon>Sophophora</taxon>
    </lineage>
</organism>
<name>TRC8_DROME</name>
<reference evidence="9 10" key="1">
    <citation type="journal article" date="2002" name="Oncogene">
        <title>The TRC8 hereditary kidney cancer gene suppresses growth and functions with VHL in a common pathway.</title>
        <authorList>
            <person name="Gemmill R.M."/>
            <person name="Bemis L.T."/>
            <person name="Lee J.P."/>
            <person name="Sozen M.A."/>
            <person name="Baron A."/>
            <person name="Zeng C."/>
            <person name="Erickson P.F."/>
            <person name="Hooper J.E."/>
            <person name="Drabkin H.A."/>
        </authorList>
    </citation>
    <scope>NUCLEOTIDE SEQUENCE [MRNA] (ISOFORM D)</scope>
    <scope>FUNCTION</scope>
    <scope>INTERACTION WITH CSN5 AND VHL</scope>
    <scope>SUBCELLULAR LOCATION</scope>
</reference>
<reference evidence="13" key="2">
    <citation type="journal article" date="2000" name="Science">
        <title>The genome sequence of Drosophila melanogaster.</title>
        <authorList>
            <person name="Adams M.D."/>
            <person name="Celniker S.E."/>
            <person name="Holt R.A."/>
            <person name="Evans C.A."/>
            <person name="Gocayne J.D."/>
            <person name="Amanatides P.G."/>
            <person name="Scherer S.E."/>
            <person name="Li P.W."/>
            <person name="Hoskins R.A."/>
            <person name="Galle R.F."/>
            <person name="George R.A."/>
            <person name="Lewis S.E."/>
            <person name="Richards S."/>
            <person name="Ashburner M."/>
            <person name="Henderson S.N."/>
            <person name="Sutton G.G."/>
            <person name="Wortman J.R."/>
            <person name="Yandell M.D."/>
            <person name="Zhang Q."/>
            <person name="Chen L.X."/>
            <person name="Brandon R.C."/>
            <person name="Rogers Y.-H.C."/>
            <person name="Blazej R.G."/>
            <person name="Champe M."/>
            <person name="Pfeiffer B.D."/>
            <person name="Wan K.H."/>
            <person name="Doyle C."/>
            <person name="Baxter E.G."/>
            <person name="Helt G."/>
            <person name="Nelson C.R."/>
            <person name="Miklos G.L.G."/>
            <person name="Abril J.F."/>
            <person name="Agbayani A."/>
            <person name="An H.-J."/>
            <person name="Andrews-Pfannkoch C."/>
            <person name="Baldwin D."/>
            <person name="Ballew R.M."/>
            <person name="Basu A."/>
            <person name="Baxendale J."/>
            <person name="Bayraktaroglu L."/>
            <person name="Beasley E.M."/>
            <person name="Beeson K.Y."/>
            <person name="Benos P.V."/>
            <person name="Berman B.P."/>
            <person name="Bhandari D."/>
            <person name="Bolshakov S."/>
            <person name="Borkova D."/>
            <person name="Botchan M.R."/>
            <person name="Bouck J."/>
            <person name="Brokstein P."/>
            <person name="Brottier P."/>
            <person name="Burtis K.C."/>
            <person name="Busam D.A."/>
            <person name="Butler H."/>
            <person name="Cadieu E."/>
            <person name="Center A."/>
            <person name="Chandra I."/>
            <person name="Cherry J.M."/>
            <person name="Cawley S."/>
            <person name="Dahlke C."/>
            <person name="Davenport L.B."/>
            <person name="Davies P."/>
            <person name="de Pablos B."/>
            <person name="Delcher A."/>
            <person name="Deng Z."/>
            <person name="Mays A.D."/>
            <person name="Dew I."/>
            <person name="Dietz S.M."/>
            <person name="Dodson K."/>
            <person name="Doup L.E."/>
            <person name="Downes M."/>
            <person name="Dugan-Rocha S."/>
            <person name="Dunkov B.C."/>
            <person name="Dunn P."/>
            <person name="Durbin K.J."/>
            <person name="Evangelista C.C."/>
            <person name="Ferraz C."/>
            <person name="Ferriera S."/>
            <person name="Fleischmann W."/>
            <person name="Fosler C."/>
            <person name="Gabrielian A.E."/>
            <person name="Garg N.S."/>
            <person name="Gelbart W.M."/>
            <person name="Glasser K."/>
            <person name="Glodek A."/>
            <person name="Gong F."/>
            <person name="Gorrell J.H."/>
            <person name="Gu Z."/>
            <person name="Guan P."/>
            <person name="Harris M."/>
            <person name="Harris N.L."/>
            <person name="Harvey D.A."/>
            <person name="Heiman T.J."/>
            <person name="Hernandez J.R."/>
            <person name="Houck J."/>
            <person name="Hostin D."/>
            <person name="Houston K.A."/>
            <person name="Howland T.J."/>
            <person name="Wei M.-H."/>
            <person name="Ibegwam C."/>
            <person name="Jalali M."/>
            <person name="Kalush F."/>
            <person name="Karpen G.H."/>
            <person name="Ke Z."/>
            <person name="Kennison J.A."/>
            <person name="Ketchum K.A."/>
            <person name="Kimmel B.E."/>
            <person name="Kodira C.D."/>
            <person name="Kraft C.L."/>
            <person name="Kravitz S."/>
            <person name="Kulp D."/>
            <person name="Lai Z."/>
            <person name="Lasko P."/>
            <person name="Lei Y."/>
            <person name="Levitsky A.A."/>
            <person name="Li J.H."/>
            <person name="Li Z."/>
            <person name="Liang Y."/>
            <person name="Lin X."/>
            <person name="Liu X."/>
            <person name="Mattei B."/>
            <person name="McIntosh T.C."/>
            <person name="McLeod M.P."/>
            <person name="McPherson D."/>
            <person name="Merkulov G."/>
            <person name="Milshina N.V."/>
            <person name="Mobarry C."/>
            <person name="Morris J."/>
            <person name="Moshrefi A."/>
            <person name="Mount S.M."/>
            <person name="Moy M."/>
            <person name="Murphy B."/>
            <person name="Murphy L."/>
            <person name="Muzny D.M."/>
            <person name="Nelson D.L."/>
            <person name="Nelson D.R."/>
            <person name="Nelson K.A."/>
            <person name="Nixon K."/>
            <person name="Nusskern D.R."/>
            <person name="Pacleb J.M."/>
            <person name="Palazzolo M."/>
            <person name="Pittman G.S."/>
            <person name="Pan S."/>
            <person name="Pollard J."/>
            <person name="Puri V."/>
            <person name="Reese M.G."/>
            <person name="Reinert K."/>
            <person name="Remington K."/>
            <person name="Saunders R.D.C."/>
            <person name="Scheeler F."/>
            <person name="Shen H."/>
            <person name="Shue B.C."/>
            <person name="Siden-Kiamos I."/>
            <person name="Simpson M."/>
            <person name="Skupski M.P."/>
            <person name="Smith T.J."/>
            <person name="Spier E."/>
            <person name="Spradling A.C."/>
            <person name="Stapleton M."/>
            <person name="Strong R."/>
            <person name="Sun E."/>
            <person name="Svirskas R."/>
            <person name="Tector C."/>
            <person name="Turner R."/>
            <person name="Venter E."/>
            <person name="Wang A.H."/>
            <person name="Wang X."/>
            <person name="Wang Z.-Y."/>
            <person name="Wassarman D.A."/>
            <person name="Weinstock G.M."/>
            <person name="Weissenbach J."/>
            <person name="Williams S.M."/>
            <person name="Woodage T."/>
            <person name="Worley K.C."/>
            <person name="Wu D."/>
            <person name="Yang S."/>
            <person name="Yao Q.A."/>
            <person name="Ye J."/>
            <person name="Yeh R.-F."/>
            <person name="Zaveri J.S."/>
            <person name="Zhan M."/>
            <person name="Zhang G."/>
            <person name="Zhao Q."/>
            <person name="Zheng L."/>
            <person name="Zheng X.H."/>
            <person name="Zhong F.N."/>
            <person name="Zhong W."/>
            <person name="Zhou X."/>
            <person name="Zhu S.C."/>
            <person name="Zhu X."/>
            <person name="Smith H.O."/>
            <person name="Gibbs R.A."/>
            <person name="Myers E.W."/>
            <person name="Rubin G.M."/>
            <person name="Venter J.C."/>
        </authorList>
    </citation>
    <scope>NUCLEOTIDE SEQUENCE [LARGE SCALE GENOMIC DNA]</scope>
    <source>
        <strain evidence="13">Berkeley</strain>
    </source>
</reference>
<reference evidence="13" key="3">
    <citation type="journal article" date="2002" name="Genome Biol.">
        <title>Annotation of the Drosophila melanogaster euchromatic genome: a systematic review.</title>
        <authorList>
            <person name="Misra S."/>
            <person name="Crosby M.A."/>
            <person name="Mungall C.J."/>
            <person name="Matthews B.B."/>
            <person name="Campbell K.S."/>
            <person name="Hradecky P."/>
            <person name="Huang Y."/>
            <person name="Kaminker J.S."/>
            <person name="Millburn G.H."/>
            <person name="Prochnik S.E."/>
            <person name="Smith C.D."/>
            <person name="Tupy J.L."/>
            <person name="Whitfield E.J."/>
            <person name="Bayraktaroglu L."/>
            <person name="Berman B.P."/>
            <person name="Bettencourt B.R."/>
            <person name="Celniker S.E."/>
            <person name="de Grey A.D.N.J."/>
            <person name="Drysdale R.A."/>
            <person name="Harris N.L."/>
            <person name="Richter J."/>
            <person name="Russo S."/>
            <person name="Schroeder A.J."/>
            <person name="Shu S.Q."/>
            <person name="Stapleton M."/>
            <person name="Yamada C."/>
            <person name="Ashburner M."/>
            <person name="Gelbart W.M."/>
            <person name="Rubin G.M."/>
            <person name="Lewis S.E."/>
        </authorList>
    </citation>
    <scope>GENOME REANNOTATION</scope>
    <source>
        <strain>Berkeley</strain>
    </source>
</reference>
<reference evidence="9 11" key="4">
    <citation type="journal article" date="2002" name="Genome Biol.">
        <title>A Drosophila full-length cDNA resource.</title>
        <authorList>
            <person name="Stapleton M."/>
            <person name="Carlson J.W."/>
            <person name="Brokstein P."/>
            <person name="Yu C."/>
            <person name="Champe M."/>
            <person name="George R.A."/>
            <person name="Guarin H."/>
            <person name="Kronmiller B."/>
            <person name="Pacleb J.M."/>
            <person name="Park S."/>
            <person name="Wan K.H."/>
            <person name="Rubin G.M."/>
            <person name="Celniker S.E."/>
        </authorList>
    </citation>
    <scope>NUCLEOTIDE SEQUENCE [LARGE SCALE MRNA] (ISOFORM A)</scope>
    <source>
        <strain evidence="11">Berkeley</strain>
        <tissue evidence="11">Embryo</tissue>
        <tissue evidence="12">Testis</tissue>
    </source>
</reference>
<reference evidence="9" key="5">
    <citation type="journal article" date="2005" name="Oncogene">
        <title>Growth suppression induced by the TRC8 hereditary kidney cancer gene is dependent upon JAB1/CSN5.</title>
        <authorList>
            <person name="Gemmill R.M."/>
            <person name="Lee J.P."/>
            <person name="Chamovitz D.A."/>
            <person name="Segal D."/>
            <person name="Hooper J.E."/>
            <person name="Drabkin H.A."/>
        </authorList>
    </citation>
    <scope>FUNCTION</scope>
</reference>
<reference key="6">
    <citation type="journal article" date="2010" name="Mol. Cancer Res.">
        <title>The TRC8 ubiquitin ligase is sterol regulated and interacts with lipid and protein biosynthetic pathways.</title>
        <authorList>
            <person name="Lee J.P."/>
            <person name="Brauweiler A."/>
            <person name="Rudolph M."/>
            <person name="Hooper J.E."/>
            <person name="Drabkin H.A."/>
            <person name="Gemmill R.M."/>
        </authorList>
    </citation>
    <scope>INTERACTION WITH CSN5; EIF3F AND EIF3H</scope>
</reference>
<keyword id="KW-0025">Alternative splicing</keyword>
<keyword id="KW-0256">Endoplasmic reticulum</keyword>
<keyword id="KW-0472">Membrane</keyword>
<keyword id="KW-0479">Metal-binding</keyword>
<keyword id="KW-1185">Reference proteome</keyword>
<keyword id="KW-0812">Transmembrane</keyword>
<keyword id="KW-1133">Transmembrane helix</keyword>
<keyword id="KW-0862">Zinc</keyword>
<keyword id="KW-0863">Zinc-finger</keyword>
<comment type="function">
    <text evidence="5 6 8">Plays a role in growth inhibition that is dependent upon COP9 signalosome subunits CSN5 and CSN6. May modulate signalosome levels or compartmentalization. Probably functions in the same or a related pathway to VHL during early midline development.</text>
</comment>
<comment type="subunit">
    <text evidence="5 7">Interacts with VHL. Interacts with the MPN domain of CSN5. Interacts with EIF3F and EIF3H.</text>
</comment>
<comment type="interaction">
    <interactant intactId="EBI-1011633">
        <id>Q7KRW1</id>
    </interactant>
    <interactant intactId="EBI-97187">
        <id>Q9XZ58</id>
        <label>CSN5</label>
    </interactant>
    <organismsDiffer>false</organismsDiffer>
    <experiments>3</experiments>
</comment>
<comment type="interaction">
    <interactant intactId="EBI-1011633">
        <id>Q7KRW1</id>
    </interactant>
    <interactant intactId="EBI-169514">
        <id>Q9V3C1</id>
        <label>Vhl</label>
    </interactant>
    <organismsDiffer>false</organismsDiffer>
    <experiments>3</experiments>
</comment>
<comment type="subcellular location">
    <subcellularLocation>
        <location evidence="5">Endoplasmic reticulum membrane</location>
        <topology evidence="5">Multi-pass membrane protein</topology>
    </subcellularLocation>
</comment>
<comment type="alternative products">
    <event type="alternative splicing"/>
    <isoform>
        <id>Q7KRW1-1</id>
        <name evidence="14">D</name>
        <sequence type="displayed"/>
    </isoform>
    <isoform>
        <id>Q7KRW1-2</id>
        <name evidence="14">A</name>
        <name evidence="14">B</name>
        <sequence type="described" ref="VSP_051924"/>
    </isoform>
</comment>
<comment type="developmental stage">
    <text evidence="5">Expressed in oocytes throughout development.</text>
</comment>
<comment type="domain">
    <text evidence="1">The RING-type zinc finger domain may be essential for ubiquitin ligase activity.</text>
</comment>
<comment type="sequence caution" evidence="9">
    <conflict type="erroneous initiation">
        <sequence resource="EMBL-CDS" id="AAL39520"/>
    </conflict>
    <text>Truncated N-terminus.</text>
</comment>
<comment type="sequence caution" evidence="9">
    <conflict type="miscellaneous discrepancy">
        <sequence resource="EMBL-CDS" id="AAN71016"/>
    </conflict>
    <text>Intron retention.</text>
</comment>
<proteinExistence type="evidence at protein level"/>
<gene>
    <name evidence="14" type="primary">Trc8</name>
    <name type="ORF">CG2304</name>
</gene>
<evidence type="ECO:0000250" key="1">
    <source>
        <dbReference type="UniProtKB" id="O75485"/>
    </source>
</evidence>
<evidence type="ECO:0000255" key="2"/>
<evidence type="ECO:0000255" key="3">
    <source>
        <dbReference type="PROSITE-ProRule" id="PRU00175"/>
    </source>
</evidence>
<evidence type="ECO:0000256" key="4">
    <source>
        <dbReference type="SAM" id="MobiDB-lite"/>
    </source>
</evidence>
<evidence type="ECO:0000269" key="5">
    <source>
    </source>
</evidence>
<evidence type="ECO:0000269" key="6">
    <source>
    </source>
</evidence>
<evidence type="ECO:0000269" key="7">
    <source>
    </source>
</evidence>
<evidence type="ECO:0000303" key="8">
    <source>
    </source>
</evidence>
<evidence type="ECO:0000305" key="9"/>
<evidence type="ECO:0000312" key="10">
    <source>
        <dbReference type="EMBL" id="AAL57300.1"/>
    </source>
</evidence>
<evidence type="ECO:0000312" key="11">
    <source>
        <dbReference type="EMBL" id="AAM52762.1"/>
    </source>
</evidence>
<evidence type="ECO:0000312" key="12">
    <source>
        <dbReference type="EMBL" id="AAN71016.1"/>
    </source>
</evidence>
<evidence type="ECO:0000312" key="13">
    <source>
        <dbReference type="EMBL" id="AAS65223.1"/>
    </source>
</evidence>
<evidence type="ECO:0000312" key="14">
    <source>
        <dbReference type="FlyBase" id="FBgn0039668"/>
    </source>
</evidence>
<accession>Q7KRW1</accession>
<accession>Q7KRW0</accession>
<accession>Q8IHG9</accession>
<accession>Q8MQX1</accession>
<accession>Q8T0E3</accession>
<accession>Q8WRY2</accession>
<accession>Q9VAK6</accession>
<protein>
    <recommendedName>
        <fullName>Protein TRC8 homolog</fullName>
    </recommendedName>
</protein>